<protein>
    <recommendedName>
        <fullName>Amphiphysin</fullName>
    </recommendedName>
</protein>
<evidence type="ECO:0000250" key="1"/>
<evidence type="ECO:0000255" key="2"/>
<evidence type="ECO:0000255" key="3">
    <source>
        <dbReference type="PROSITE-ProRule" id="PRU00192"/>
    </source>
</evidence>
<evidence type="ECO:0000255" key="4">
    <source>
        <dbReference type="PROSITE-ProRule" id="PRU00361"/>
    </source>
</evidence>
<evidence type="ECO:0000256" key="5">
    <source>
        <dbReference type="SAM" id="MobiDB-lite"/>
    </source>
</evidence>
<gene>
    <name type="primary">AMPH</name>
</gene>
<organism>
    <name type="scientific">Gallus gallus</name>
    <name type="common">Chicken</name>
    <dbReference type="NCBI Taxonomy" id="9031"/>
    <lineage>
        <taxon>Eukaryota</taxon>
        <taxon>Metazoa</taxon>
        <taxon>Chordata</taxon>
        <taxon>Craniata</taxon>
        <taxon>Vertebrata</taxon>
        <taxon>Euteleostomi</taxon>
        <taxon>Archelosauria</taxon>
        <taxon>Archosauria</taxon>
        <taxon>Dinosauria</taxon>
        <taxon>Saurischia</taxon>
        <taxon>Theropoda</taxon>
        <taxon>Coelurosauria</taxon>
        <taxon>Aves</taxon>
        <taxon>Neognathae</taxon>
        <taxon>Galloanserae</taxon>
        <taxon>Galliformes</taxon>
        <taxon>Phasianidae</taxon>
        <taxon>Phasianinae</taxon>
        <taxon>Gallus</taxon>
    </lineage>
</organism>
<proteinExistence type="evidence at transcript level"/>
<sequence length="682" mass="75205">MADMKTGIFAKNVQKRLNRAQEKVLQKLGKADETKDEQFEEYVQNFKRQEAEGSRLQRELRAYLAAIKGMQDASKKLTESLHEVYEPDWYGREDVKMIGEKCDELWEDFHQKLVDGSLLTLDTYLGQFPDIKTRIAKRSRKLVDYDSARHHLEALQSSKRKDEGRITKAEEEFQKAQKVFEEFNTDLQEELPSLWSRRVGFYVNTFKNVSSLEAKFHKEIALLCHKLYEVMTKLGDQHADKAFTIQGAPSDSGPLRIAKTPSPPEEVSPLPSPTASPNHMLAPASPAPARPKSPTQLRKGPPVPPLPKLTPTKELQQENIINLFDDNFVPEINVTTPSQNEIPETKKVESLLDLDFDPFKPEVVSTGVTHSPMSQTLPWDLWTTTSELVQPASSTAFNGFAQDTTAFAVQSNENVTETLTEAEEAPLGELKVEETPTAAVVEKEAILAEPDEPTEQAAESIEAGDKETTGIAEKESEVVSAAGGAVAVEDSVVVAAGAGEGAVRTEQEAAAEGDKPQGEEKDVDVSQEKVSSIPSVVIEPASNNEGEGEEHHVIMNESKDAAAEMGTQGTDSETSQIGSEQKATEEIQTTPSQDQPASAGDTASDMPPGFLFKVEVLHDFEAANSDELNLKRGDIVLVIPSETTADQEAGWLTGIKESEWLQYRDANSYKGLFPENFTRHLE</sequence>
<dbReference type="EMBL" id="X60422">
    <property type="protein sequence ID" value="CAA42953.1"/>
    <property type="molecule type" value="mRNA"/>
</dbReference>
<dbReference type="PIR" id="S22700">
    <property type="entry name" value="S22700"/>
</dbReference>
<dbReference type="RefSeq" id="NP_001004398.1">
    <property type="nucleotide sequence ID" value="NM_001004398.1"/>
</dbReference>
<dbReference type="SMR" id="P50478"/>
<dbReference type="ELM" id="P50478"/>
<dbReference type="FunCoup" id="P50478">
    <property type="interactions" value="376"/>
</dbReference>
<dbReference type="STRING" id="9031.ENSGALP00000046761"/>
<dbReference type="GlyGen" id="P50478">
    <property type="glycosylation" value="2 sites"/>
</dbReference>
<dbReference type="PaxDb" id="9031-ENSGALP00000018798"/>
<dbReference type="GeneID" id="420761"/>
<dbReference type="KEGG" id="gga:420761"/>
<dbReference type="CTD" id="273"/>
<dbReference type="VEuPathDB" id="HostDB:geneid_420761"/>
<dbReference type="eggNOG" id="KOG3771">
    <property type="taxonomic scope" value="Eukaryota"/>
</dbReference>
<dbReference type="InParanoid" id="P50478"/>
<dbReference type="OrthoDB" id="446293at2759"/>
<dbReference type="PhylomeDB" id="P50478"/>
<dbReference type="PRO" id="PR:P50478"/>
<dbReference type="Proteomes" id="UP000000539">
    <property type="component" value="Unassembled WGS sequence"/>
</dbReference>
<dbReference type="GO" id="GO:0005856">
    <property type="term" value="C:cytoskeleton"/>
    <property type="evidence" value="ECO:0007669"/>
    <property type="project" value="UniProtKB-SubCell"/>
</dbReference>
<dbReference type="GO" id="GO:0044306">
    <property type="term" value="C:neuron projection terminus"/>
    <property type="evidence" value="ECO:0000314"/>
    <property type="project" value="AgBase"/>
</dbReference>
<dbReference type="GO" id="GO:0005886">
    <property type="term" value="C:plasma membrane"/>
    <property type="evidence" value="ECO:0000318"/>
    <property type="project" value="GO_Central"/>
</dbReference>
<dbReference type="GO" id="GO:0008021">
    <property type="term" value="C:synaptic vesicle"/>
    <property type="evidence" value="ECO:0000314"/>
    <property type="project" value="AgBase"/>
</dbReference>
<dbReference type="GO" id="GO:0030672">
    <property type="term" value="C:synaptic vesicle membrane"/>
    <property type="evidence" value="ECO:0007669"/>
    <property type="project" value="UniProtKB-SubCell"/>
</dbReference>
<dbReference type="GO" id="GO:0005543">
    <property type="term" value="F:phospholipid binding"/>
    <property type="evidence" value="ECO:0000318"/>
    <property type="project" value="GO_Central"/>
</dbReference>
<dbReference type="GO" id="GO:0048488">
    <property type="term" value="P:synaptic vesicle endocytosis"/>
    <property type="evidence" value="ECO:0000318"/>
    <property type="project" value="GO_Central"/>
</dbReference>
<dbReference type="CDD" id="cd07611">
    <property type="entry name" value="BAR_Amphiphysin_I_II"/>
    <property type="match status" value="1"/>
</dbReference>
<dbReference type="CDD" id="cd12140">
    <property type="entry name" value="SH3_Amphiphysin_I"/>
    <property type="match status" value="1"/>
</dbReference>
<dbReference type="FunFam" id="2.30.30.40:FF:000103">
    <property type="entry name" value="Amphiphysin"/>
    <property type="match status" value="1"/>
</dbReference>
<dbReference type="FunFam" id="1.20.1270.60:FF:000013">
    <property type="entry name" value="Amphiphysin isoform 2"/>
    <property type="match status" value="1"/>
</dbReference>
<dbReference type="Gene3D" id="1.20.1270.60">
    <property type="entry name" value="Arfaptin homology (AH) domain/BAR domain"/>
    <property type="match status" value="1"/>
</dbReference>
<dbReference type="Gene3D" id="2.30.30.40">
    <property type="entry name" value="SH3 Domains"/>
    <property type="match status" value="1"/>
</dbReference>
<dbReference type="InterPro" id="IPR027267">
    <property type="entry name" value="AH/BAR_dom_sf"/>
</dbReference>
<dbReference type="InterPro" id="IPR003005">
    <property type="entry name" value="Amphiphysin"/>
</dbReference>
<dbReference type="InterPro" id="IPR003017">
    <property type="entry name" value="Amphiphysin_1"/>
</dbReference>
<dbReference type="InterPro" id="IPR035470">
    <property type="entry name" value="Amphiphysin_I_SH3"/>
</dbReference>
<dbReference type="InterPro" id="IPR004148">
    <property type="entry name" value="BAR_dom"/>
</dbReference>
<dbReference type="InterPro" id="IPR036028">
    <property type="entry name" value="SH3-like_dom_sf"/>
</dbReference>
<dbReference type="InterPro" id="IPR001452">
    <property type="entry name" value="SH3_domain"/>
</dbReference>
<dbReference type="PANTHER" id="PTHR46514">
    <property type="entry name" value="AMPHIPHYSIN"/>
    <property type="match status" value="1"/>
</dbReference>
<dbReference type="PANTHER" id="PTHR46514:SF2">
    <property type="entry name" value="AMPHIPHYSIN"/>
    <property type="match status" value="1"/>
</dbReference>
<dbReference type="Pfam" id="PF03114">
    <property type="entry name" value="BAR"/>
    <property type="match status" value="1"/>
</dbReference>
<dbReference type="Pfam" id="PF14604">
    <property type="entry name" value="SH3_9"/>
    <property type="match status" value="1"/>
</dbReference>
<dbReference type="PRINTS" id="PR01251">
    <property type="entry name" value="AMPHIPHYSIN"/>
</dbReference>
<dbReference type="PRINTS" id="PR01252">
    <property type="entry name" value="AMPHIPHYSIN1"/>
</dbReference>
<dbReference type="PRINTS" id="PR00452">
    <property type="entry name" value="SH3DOMAIN"/>
</dbReference>
<dbReference type="SMART" id="SM00721">
    <property type="entry name" value="BAR"/>
    <property type="match status" value="1"/>
</dbReference>
<dbReference type="SMART" id="SM00326">
    <property type="entry name" value="SH3"/>
    <property type="match status" value="1"/>
</dbReference>
<dbReference type="SUPFAM" id="SSF103657">
    <property type="entry name" value="BAR/IMD domain-like"/>
    <property type="match status" value="1"/>
</dbReference>
<dbReference type="SUPFAM" id="SSF50044">
    <property type="entry name" value="SH3-domain"/>
    <property type="match status" value="1"/>
</dbReference>
<dbReference type="PROSITE" id="PS51021">
    <property type="entry name" value="BAR"/>
    <property type="match status" value="1"/>
</dbReference>
<dbReference type="PROSITE" id="PS50002">
    <property type="entry name" value="SH3"/>
    <property type="match status" value="1"/>
</dbReference>
<keyword id="KW-0175">Coiled coil</keyword>
<keyword id="KW-0963">Cytoplasm</keyword>
<keyword id="KW-0968">Cytoplasmic vesicle</keyword>
<keyword id="KW-0206">Cytoskeleton</keyword>
<keyword id="KW-0472">Membrane</keyword>
<keyword id="KW-1185">Reference proteome</keyword>
<keyword id="KW-0728">SH3 domain</keyword>
<keyword id="KW-0770">Synapse</keyword>
<comment type="function">
    <text>May participate in mechanisms of regulated exocytosis in synapses and certain endocrine cell types. May control the properties of the membrane associated cytoskeleton.</text>
</comment>
<comment type="subunit">
    <text evidence="1">Heterodimer with BIN1. Binds SH3GLB1 (By similarity).</text>
</comment>
<comment type="subcellular location">
    <subcellularLocation>
        <location>Cytoplasmic vesicle</location>
        <location>Secretory vesicle</location>
        <location>Synaptic vesicle membrane</location>
        <topology>Peripheral membrane protein</topology>
        <orientation>Cytoplasmic side</orientation>
    </subcellularLocation>
    <subcellularLocation>
        <location>Cytoplasm</location>
        <location>Cytoskeleton</location>
    </subcellularLocation>
</comment>
<comment type="tissue specificity">
    <text>Is abundant in the forebrain and cerebellum. It is also found in the adrenal gland, anterior and posterior pituitary.</text>
</comment>
<name>AMPH_CHICK</name>
<feature type="chain" id="PRO_0000192950" description="Amphiphysin">
    <location>
        <begin position="1"/>
        <end position="682"/>
    </location>
</feature>
<feature type="domain" description="BAR" evidence="4">
    <location>
        <begin position="24"/>
        <end position="240"/>
    </location>
</feature>
<feature type="domain" description="SH3" evidence="3">
    <location>
        <begin position="609"/>
        <end position="682"/>
    </location>
</feature>
<feature type="region of interest" description="Disordered" evidence="5">
    <location>
        <begin position="244"/>
        <end position="310"/>
    </location>
</feature>
<feature type="region of interest" description="Disordered" evidence="5">
    <location>
        <begin position="446"/>
        <end position="470"/>
    </location>
</feature>
<feature type="region of interest" description="Disordered" evidence="5">
    <location>
        <begin position="501"/>
        <end position="530"/>
    </location>
</feature>
<feature type="region of interest" description="Disordered" evidence="5">
    <location>
        <begin position="561"/>
        <end position="606"/>
    </location>
</feature>
<feature type="coiled-coil region" evidence="2">
    <location>
        <begin position="10"/>
        <end position="84"/>
    </location>
</feature>
<feature type="coiled-coil region" evidence="2">
    <location>
        <begin position="144"/>
        <end position="191"/>
    </location>
</feature>
<feature type="compositionally biased region" description="Pro residues" evidence="5">
    <location>
        <begin position="261"/>
        <end position="274"/>
    </location>
</feature>
<feature type="compositionally biased region" description="Basic and acidic residues" evidence="5">
    <location>
        <begin position="503"/>
        <end position="527"/>
    </location>
</feature>
<feature type="compositionally biased region" description="Polar residues" evidence="5">
    <location>
        <begin position="567"/>
        <end position="596"/>
    </location>
</feature>
<accession>P50478</accession>
<reference key="1">
    <citation type="journal article" date="1992" name="EMBO J.">
        <title>Amphiphysin, a novel protein associated with synaptic vesicles.</title>
        <authorList>
            <person name="Lichte B."/>
            <person name="Veh R.W."/>
            <person name="Meyer H.E."/>
            <person name="Kilimann M.W."/>
        </authorList>
    </citation>
    <scope>NUCLEOTIDE SEQUENCE [MRNA]</scope>
    <source>
        <strain>Tetra-hybrid</strain>
        <tissue>Forebrain</tissue>
    </source>
</reference>